<name>RECF_SHEPA</name>
<comment type="function">
    <text evidence="1">The RecF protein is involved in DNA metabolism; it is required for DNA replication and normal SOS inducibility. RecF binds preferentially to single-stranded, linear DNA. It also seems to bind ATP.</text>
</comment>
<comment type="subcellular location">
    <subcellularLocation>
        <location evidence="1">Cytoplasm</location>
    </subcellularLocation>
</comment>
<comment type="similarity">
    <text evidence="1">Belongs to the RecF family.</text>
</comment>
<keyword id="KW-0067">ATP-binding</keyword>
<keyword id="KW-0963">Cytoplasm</keyword>
<keyword id="KW-0227">DNA damage</keyword>
<keyword id="KW-0234">DNA repair</keyword>
<keyword id="KW-0235">DNA replication</keyword>
<keyword id="KW-0238">DNA-binding</keyword>
<keyword id="KW-0547">Nucleotide-binding</keyword>
<keyword id="KW-1185">Reference proteome</keyword>
<keyword id="KW-0742">SOS response</keyword>
<accession>A8GYE5</accession>
<protein>
    <recommendedName>
        <fullName evidence="1">DNA replication and repair protein RecF</fullName>
    </recommendedName>
</protein>
<reference key="1">
    <citation type="submission" date="2007-10" db="EMBL/GenBank/DDBJ databases">
        <title>Complete sequence of Shewanella pealeana ATCC 700345.</title>
        <authorList>
            <consortium name="US DOE Joint Genome Institute"/>
            <person name="Copeland A."/>
            <person name="Lucas S."/>
            <person name="Lapidus A."/>
            <person name="Barry K."/>
            <person name="Glavina del Rio T."/>
            <person name="Dalin E."/>
            <person name="Tice H."/>
            <person name="Pitluck S."/>
            <person name="Chertkov O."/>
            <person name="Brettin T."/>
            <person name="Bruce D."/>
            <person name="Detter J.C."/>
            <person name="Han C."/>
            <person name="Schmutz J."/>
            <person name="Larimer F."/>
            <person name="Land M."/>
            <person name="Hauser L."/>
            <person name="Kyrpides N."/>
            <person name="Kim E."/>
            <person name="Zhao J.-S.Z."/>
            <person name="Manno D."/>
            <person name="Hawari J."/>
            <person name="Richardson P."/>
        </authorList>
    </citation>
    <scope>NUCLEOTIDE SEQUENCE [LARGE SCALE GENOMIC DNA]</scope>
    <source>
        <strain>ATCC 700345 / ANG-SQ1</strain>
    </source>
</reference>
<organism>
    <name type="scientific">Shewanella pealeana (strain ATCC 700345 / ANG-SQ1)</name>
    <dbReference type="NCBI Taxonomy" id="398579"/>
    <lineage>
        <taxon>Bacteria</taxon>
        <taxon>Pseudomonadati</taxon>
        <taxon>Pseudomonadota</taxon>
        <taxon>Gammaproteobacteria</taxon>
        <taxon>Alteromonadales</taxon>
        <taxon>Shewanellaceae</taxon>
        <taxon>Shewanella</taxon>
    </lineage>
</organism>
<dbReference type="EMBL" id="CP000851">
    <property type="protein sequence ID" value="ABV85332.1"/>
    <property type="molecule type" value="Genomic_DNA"/>
</dbReference>
<dbReference type="RefSeq" id="WP_012153280.1">
    <property type="nucleotide sequence ID" value="NC_009901.1"/>
</dbReference>
<dbReference type="SMR" id="A8GYE5"/>
<dbReference type="STRING" id="398579.Spea_0003"/>
<dbReference type="KEGG" id="spl:Spea_0003"/>
<dbReference type="eggNOG" id="COG1195">
    <property type="taxonomic scope" value="Bacteria"/>
</dbReference>
<dbReference type="HOGENOM" id="CLU_040267_0_0_6"/>
<dbReference type="OrthoDB" id="9803889at2"/>
<dbReference type="Proteomes" id="UP000002608">
    <property type="component" value="Chromosome"/>
</dbReference>
<dbReference type="GO" id="GO:0005737">
    <property type="term" value="C:cytoplasm"/>
    <property type="evidence" value="ECO:0007669"/>
    <property type="project" value="UniProtKB-SubCell"/>
</dbReference>
<dbReference type="GO" id="GO:0005524">
    <property type="term" value="F:ATP binding"/>
    <property type="evidence" value="ECO:0007669"/>
    <property type="project" value="UniProtKB-UniRule"/>
</dbReference>
<dbReference type="GO" id="GO:0003697">
    <property type="term" value="F:single-stranded DNA binding"/>
    <property type="evidence" value="ECO:0007669"/>
    <property type="project" value="UniProtKB-UniRule"/>
</dbReference>
<dbReference type="GO" id="GO:0006260">
    <property type="term" value="P:DNA replication"/>
    <property type="evidence" value="ECO:0007669"/>
    <property type="project" value="UniProtKB-UniRule"/>
</dbReference>
<dbReference type="GO" id="GO:0000731">
    <property type="term" value="P:DNA synthesis involved in DNA repair"/>
    <property type="evidence" value="ECO:0007669"/>
    <property type="project" value="TreeGrafter"/>
</dbReference>
<dbReference type="GO" id="GO:0006302">
    <property type="term" value="P:double-strand break repair"/>
    <property type="evidence" value="ECO:0007669"/>
    <property type="project" value="TreeGrafter"/>
</dbReference>
<dbReference type="GO" id="GO:0009432">
    <property type="term" value="P:SOS response"/>
    <property type="evidence" value="ECO:0007669"/>
    <property type="project" value="UniProtKB-UniRule"/>
</dbReference>
<dbReference type="Gene3D" id="3.40.50.300">
    <property type="entry name" value="P-loop containing nucleotide triphosphate hydrolases"/>
    <property type="match status" value="1"/>
</dbReference>
<dbReference type="Gene3D" id="1.20.1050.90">
    <property type="entry name" value="RecF/RecN/SMC, N-terminal domain"/>
    <property type="match status" value="1"/>
</dbReference>
<dbReference type="HAMAP" id="MF_00365">
    <property type="entry name" value="RecF"/>
    <property type="match status" value="1"/>
</dbReference>
<dbReference type="InterPro" id="IPR001238">
    <property type="entry name" value="DNA-binding_RecF"/>
</dbReference>
<dbReference type="InterPro" id="IPR018078">
    <property type="entry name" value="DNA-binding_RecF_CS"/>
</dbReference>
<dbReference type="InterPro" id="IPR027417">
    <property type="entry name" value="P-loop_NTPase"/>
</dbReference>
<dbReference type="InterPro" id="IPR003395">
    <property type="entry name" value="RecF/RecN/SMC_N"/>
</dbReference>
<dbReference type="InterPro" id="IPR042174">
    <property type="entry name" value="RecF_2"/>
</dbReference>
<dbReference type="NCBIfam" id="TIGR00611">
    <property type="entry name" value="recf"/>
    <property type="match status" value="1"/>
</dbReference>
<dbReference type="PANTHER" id="PTHR32182">
    <property type="entry name" value="DNA REPLICATION AND REPAIR PROTEIN RECF"/>
    <property type="match status" value="1"/>
</dbReference>
<dbReference type="PANTHER" id="PTHR32182:SF0">
    <property type="entry name" value="DNA REPLICATION AND REPAIR PROTEIN RECF"/>
    <property type="match status" value="1"/>
</dbReference>
<dbReference type="Pfam" id="PF02463">
    <property type="entry name" value="SMC_N"/>
    <property type="match status" value="1"/>
</dbReference>
<dbReference type="SUPFAM" id="SSF52540">
    <property type="entry name" value="P-loop containing nucleoside triphosphate hydrolases"/>
    <property type="match status" value="1"/>
</dbReference>
<dbReference type="PROSITE" id="PS00617">
    <property type="entry name" value="RECF_1"/>
    <property type="match status" value="1"/>
</dbReference>
<dbReference type="PROSITE" id="PS00618">
    <property type="entry name" value="RECF_2"/>
    <property type="match status" value="1"/>
</dbReference>
<sequence length="360" mass="40660">MSLSRLHIESFRNISSAQLQPGDGLNLIYGHNGSGKTSILEAIYFLGMGRSFRSHLSQRVIKNDDDALTLFANMESGDEQSKIGLRRFRSGDIEVKINGDKVKRLSTLAETLPIQVITPESFSLLFEGPKSRRQFIDWGAFHSDPRFYAAWVNVRRILKQRNQLLRDGSPYSSIQFWDKEFIRYAELVTDIRKQYVDSLNELLKGIIGEFLPQVDVKVSFTRGWDAKTEYAQLLETQYPRDLATGYTVSGPHKADLRLRVGTLPAQDALSRGQLKLLVCALRIAQGKLLKQQIDKKSIYLVDDLPSELDAKHRKLLLQQLADTGAQVFVTAIEPAAIVDSLITPPSKMFHVEQGRVTVIE</sequence>
<feature type="chain" id="PRO_1000079606" description="DNA replication and repair protein RecF">
    <location>
        <begin position="1"/>
        <end position="360"/>
    </location>
</feature>
<feature type="binding site" evidence="1">
    <location>
        <begin position="30"/>
        <end position="37"/>
    </location>
    <ligand>
        <name>ATP</name>
        <dbReference type="ChEBI" id="CHEBI:30616"/>
    </ligand>
</feature>
<gene>
    <name evidence="1" type="primary">recF</name>
    <name type="ordered locus">Spea_0003</name>
</gene>
<proteinExistence type="inferred from homology"/>
<evidence type="ECO:0000255" key="1">
    <source>
        <dbReference type="HAMAP-Rule" id="MF_00365"/>
    </source>
</evidence>